<name>RL17_VESOH</name>
<proteinExistence type="inferred from homology"/>
<comment type="subunit">
    <text evidence="1">Part of the 50S ribosomal subunit. Contacts protein L32.</text>
</comment>
<comment type="similarity">
    <text evidence="1">Belongs to the bacterial ribosomal protein bL17 family.</text>
</comment>
<dbReference type="EMBL" id="AP009247">
    <property type="protein sequence ID" value="BAF61325.1"/>
    <property type="molecule type" value="Genomic_DNA"/>
</dbReference>
<dbReference type="RefSeq" id="WP_011929595.1">
    <property type="nucleotide sequence ID" value="NC_009465.1"/>
</dbReference>
<dbReference type="SMR" id="A5CXJ0"/>
<dbReference type="STRING" id="412965.COSY_0195"/>
<dbReference type="KEGG" id="vok:COSY_0195"/>
<dbReference type="eggNOG" id="COG0203">
    <property type="taxonomic scope" value="Bacteria"/>
</dbReference>
<dbReference type="HOGENOM" id="CLU_074407_2_0_6"/>
<dbReference type="OrthoDB" id="9809073at2"/>
<dbReference type="Proteomes" id="UP000000247">
    <property type="component" value="Chromosome"/>
</dbReference>
<dbReference type="GO" id="GO:0022625">
    <property type="term" value="C:cytosolic large ribosomal subunit"/>
    <property type="evidence" value="ECO:0007669"/>
    <property type="project" value="TreeGrafter"/>
</dbReference>
<dbReference type="GO" id="GO:0003735">
    <property type="term" value="F:structural constituent of ribosome"/>
    <property type="evidence" value="ECO:0007669"/>
    <property type="project" value="InterPro"/>
</dbReference>
<dbReference type="GO" id="GO:0006412">
    <property type="term" value="P:translation"/>
    <property type="evidence" value="ECO:0007669"/>
    <property type="project" value="UniProtKB-UniRule"/>
</dbReference>
<dbReference type="FunFam" id="3.90.1030.10:FF:000001">
    <property type="entry name" value="50S ribosomal protein L17"/>
    <property type="match status" value="1"/>
</dbReference>
<dbReference type="Gene3D" id="3.90.1030.10">
    <property type="entry name" value="Ribosomal protein L17"/>
    <property type="match status" value="1"/>
</dbReference>
<dbReference type="HAMAP" id="MF_01368">
    <property type="entry name" value="Ribosomal_bL17"/>
    <property type="match status" value="1"/>
</dbReference>
<dbReference type="InterPro" id="IPR000456">
    <property type="entry name" value="Ribosomal_bL17"/>
</dbReference>
<dbReference type="InterPro" id="IPR047859">
    <property type="entry name" value="Ribosomal_bL17_CS"/>
</dbReference>
<dbReference type="InterPro" id="IPR036373">
    <property type="entry name" value="Ribosomal_bL17_sf"/>
</dbReference>
<dbReference type="NCBIfam" id="TIGR00059">
    <property type="entry name" value="L17"/>
    <property type="match status" value="1"/>
</dbReference>
<dbReference type="PANTHER" id="PTHR14413:SF16">
    <property type="entry name" value="LARGE RIBOSOMAL SUBUNIT PROTEIN BL17M"/>
    <property type="match status" value="1"/>
</dbReference>
<dbReference type="PANTHER" id="PTHR14413">
    <property type="entry name" value="RIBOSOMAL PROTEIN L17"/>
    <property type="match status" value="1"/>
</dbReference>
<dbReference type="Pfam" id="PF01196">
    <property type="entry name" value="Ribosomal_L17"/>
    <property type="match status" value="1"/>
</dbReference>
<dbReference type="SUPFAM" id="SSF64263">
    <property type="entry name" value="Prokaryotic ribosomal protein L17"/>
    <property type="match status" value="1"/>
</dbReference>
<dbReference type="PROSITE" id="PS01167">
    <property type="entry name" value="RIBOSOMAL_L17"/>
    <property type="match status" value="1"/>
</dbReference>
<evidence type="ECO:0000255" key="1">
    <source>
        <dbReference type="HAMAP-Rule" id="MF_01368"/>
    </source>
</evidence>
<evidence type="ECO:0000305" key="2"/>
<feature type="chain" id="PRO_1000055989" description="Large ribosomal subunit protein bL17">
    <location>
        <begin position="1"/>
        <end position="131"/>
    </location>
</feature>
<gene>
    <name evidence="1" type="primary">rplQ</name>
    <name type="ordered locus">COSY_0195</name>
</gene>
<sequence length="131" mass="14801">MRHRKSGRQLNRNASHRKAMFKNMANSLFLYKTIRTTLPKAKELRRVVEPLITKAKIDSVANRRNAFSKLRDSAIVAKLFTELAPFYKDRPGGYIRILKAGFRTGDKAAMAIVQLIDLETMTDTTAGTTTS</sequence>
<protein>
    <recommendedName>
        <fullName evidence="1">Large ribosomal subunit protein bL17</fullName>
    </recommendedName>
    <alternativeName>
        <fullName evidence="2">50S ribosomal protein L17</fullName>
    </alternativeName>
</protein>
<keyword id="KW-1185">Reference proteome</keyword>
<keyword id="KW-0687">Ribonucleoprotein</keyword>
<keyword id="KW-0689">Ribosomal protein</keyword>
<organism>
    <name type="scientific">Vesicomyosocius okutanii subsp. Calyptogena okutanii (strain HA)</name>
    <dbReference type="NCBI Taxonomy" id="412965"/>
    <lineage>
        <taxon>Bacteria</taxon>
        <taxon>Pseudomonadati</taxon>
        <taxon>Pseudomonadota</taxon>
        <taxon>Gammaproteobacteria</taxon>
        <taxon>Candidatus Pseudothioglobaceae</taxon>
        <taxon>Candidatus Vesicomyosocius</taxon>
    </lineage>
</organism>
<reference key="1">
    <citation type="journal article" date="2007" name="Curr. Biol.">
        <title>Reduced genome of the thioautotrophic intracellular symbiont in a deep-sea clam, Calyptogena okutanii.</title>
        <authorList>
            <person name="Kuwahara H."/>
            <person name="Yoshida T."/>
            <person name="Takaki Y."/>
            <person name="Shimamura S."/>
            <person name="Nishi S."/>
            <person name="Harada M."/>
            <person name="Matsuyama K."/>
            <person name="Takishita K."/>
            <person name="Kawato M."/>
            <person name="Uematsu K."/>
            <person name="Fujiwara Y."/>
            <person name="Sato T."/>
            <person name="Kato C."/>
            <person name="Kitagawa M."/>
            <person name="Kato I."/>
            <person name="Maruyama T."/>
        </authorList>
    </citation>
    <scope>NUCLEOTIDE SEQUENCE [LARGE SCALE GENOMIC DNA]</scope>
    <source>
        <strain>HA</strain>
    </source>
</reference>
<accession>A5CXJ0</accession>